<organism>
    <name type="scientific">Bacteroides fragilis (strain ATCC 25285 / DSM 2151 / CCUG 4856 / JCM 11019 / LMG 10263 / NCTC 9343 / Onslow / VPI 2553 / EN-2)</name>
    <dbReference type="NCBI Taxonomy" id="272559"/>
    <lineage>
        <taxon>Bacteria</taxon>
        <taxon>Pseudomonadati</taxon>
        <taxon>Bacteroidota</taxon>
        <taxon>Bacteroidia</taxon>
        <taxon>Bacteroidales</taxon>
        <taxon>Bacteroidaceae</taxon>
        <taxon>Bacteroides</taxon>
    </lineage>
</organism>
<reference key="1">
    <citation type="journal article" date="2005" name="Science">
        <title>Extensive DNA inversions in the B. fragilis genome control variable gene expression.</title>
        <authorList>
            <person name="Cerdeno-Tarraga A.-M."/>
            <person name="Patrick S."/>
            <person name="Crossman L.C."/>
            <person name="Blakely G."/>
            <person name="Abratt V."/>
            <person name="Lennard N."/>
            <person name="Poxton I."/>
            <person name="Duerden B."/>
            <person name="Harris B."/>
            <person name="Quail M.A."/>
            <person name="Barron A."/>
            <person name="Clark L."/>
            <person name="Corton C."/>
            <person name="Doggett J."/>
            <person name="Holden M.T.G."/>
            <person name="Larke N."/>
            <person name="Line A."/>
            <person name="Lord A."/>
            <person name="Norbertczak H."/>
            <person name="Ormond D."/>
            <person name="Price C."/>
            <person name="Rabbinowitsch E."/>
            <person name="Woodward J."/>
            <person name="Barrell B.G."/>
            <person name="Parkhill J."/>
        </authorList>
    </citation>
    <scope>NUCLEOTIDE SEQUENCE [LARGE SCALE GENOMIC DNA]</scope>
    <source>
        <strain>ATCC 25285 / DSM 2151 / CCUG 4856 / JCM 11019 / LMG 10263 / NCTC 9343 / Onslow / VPI 2553 / EN-2</strain>
    </source>
</reference>
<gene>
    <name evidence="1" type="primary">mscL</name>
    <name type="ordered locus">BF0886</name>
</gene>
<feature type="chain" id="PRO_0000237976" description="Large-conductance mechanosensitive channel">
    <location>
        <begin position="1"/>
        <end position="146"/>
    </location>
</feature>
<feature type="transmembrane region" description="Helical" evidence="1">
    <location>
        <begin position="12"/>
        <end position="32"/>
    </location>
</feature>
<feature type="transmembrane region" description="Helical" evidence="1">
    <location>
        <begin position="88"/>
        <end position="108"/>
    </location>
</feature>
<comment type="function">
    <text evidence="1">Channel that opens in response to stretch forces in the membrane lipid bilayer. May participate in the regulation of osmotic pressure changes within the cell.</text>
</comment>
<comment type="subunit">
    <text evidence="1">Homopentamer.</text>
</comment>
<comment type="subcellular location">
    <subcellularLocation>
        <location evidence="1">Cell inner membrane</location>
        <topology evidence="1">Multi-pass membrane protein</topology>
    </subcellularLocation>
</comment>
<comment type="similarity">
    <text evidence="1">Belongs to the MscL family.</text>
</comment>
<dbReference type="EMBL" id="CR626927">
    <property type="protein sequence ID" value="CAH06629.1"/>
    <property type="molecule type" value="Genomic_DNA"/>
</dbReference>
<dbReference type="RefSeq" id="WP_005785250.1">
    <property type="nucleotide sequence ID" value="NZ_UFTH01000001.1"/>
</dbReference>
<dbReference type="SMR" id="Q5LGV7"/>
<dbReference type="PaxDb" id="272559-BF9343_0848"/>
<dbReference type="GeneID" id="60370103"/>
<dbReference type="KEGG" id="bfs:BF9343_0848"/>
<dbReference type="eggNOG" id="COG1970">
    <property type="taxonomic scope" value="Bacteria"/>
</dbReference>
<dbReference type="HOGENOM" id="CLU_095787_0_0_10"/>
<dbReference type="Proteomes" id="UP000006731">
    <property type="component" value="Chromosome"/>
</dbReference>
<dbReference type="GO" id="GO:0005886">
    <property type="term" value="C:plasma membrane"/>
    <property type="evidence" value="ECO:0007669"/>
    <property type="project" value="UniProtKB-SubCell"/>
</dbReference>
<dbReference type="GO" id="GO:0008381">
    <property type="term" value="F:mechanosensitive monoatomic ion channel activity"/>
    <property type="evidence" value="ECO:0007669"/>
    <property type="project" value="UniProtKB-UniRule"/>
</dbReference>
<dbReference type="FunFam" id="1.10.1200.120:FF:000001">
    <property type="entry name" value="Large-conductance mechanosensitive channel"/>
    <property type="match status" value="1"/>
</dbReference>
<dbReference type="Gene3D" id="1.10.1200.120">
    <property type="entry name" value="Large-conductance mechanosensitive channel, MscL, domain 1"/>
    <property type="match status" value="1"/>
</dbReference>
<dbReference type="HAMAP" id="MF_00115">
    <property type="entry name" value="MscL"/>
    <property type="match status" value="1"/>
</dbReference>
<dbReference type="InterPro" id="IPR019823">
    <property type="entry name" value="Mechanosensitive_channel_CS"/>
</dbReference>
<dbReference type="InterPro" id="IPR001185">
    <property type="entry name" value="MS_channel"/>
</dbReference>
<dbReference type="InterPro" id="IPR037673">
    <property type="entry name" value="MSC/AndL"/>
</dbReference>
<dbReference type="InterPro" id="IPR036019">
    <property type="entry name" value="MscL_channel"/>
</dbReference>
<dbReference type="NCBIfam" id="TIGR00220">
    <property type="entry name" value="mscL"/>
    <property type="match status" value="1"/>
</dbReference>
<dbReference type="NCBIfam" id="NF001843">
    <property type="entry name" value="PRK00567.1-4"/>
    <property type="match status" value="1"/>
</dbReference>
<dbReference type="PANTHER" id="PTHR30266:SF2">
    <property type="entry name" value="LARGE-CONDUCTANCE MECHANOSENSITIVE CHANNEL"/>
    <property type="match status" value="1"/>
</dbReference>
<dbReference type="PANTHER" id="PTHR30266">
    <property type="entry name" value="MECHANOSENSITIVE CHANNEL MSCL"/>
    <property type="match status" value="1"/>
</dbReference>
<dbReference type="Pfam" id="PF01741">
    <property type="entry name" value="MscL"/>
    <property type="match status" value="1"/>
</dbReference>
<dbReference type="PRINTS" id="PR01264">
    <property type="entry name" value="MECHCHANNEL"/>
</dbReference>
<dbReference type="SUPFAM" id="SSF81330">
    <property type="entry name" value="Gated mechanosensitive channel"/>
    <property type="match status" value="1"/>
</dbReference>
<dbReference type="PROSITE" id="PS01327">
    <property type="entry name" value="MSCL"/>
    <property type="match status" value="1"/>
</dbReference>
<protein>
    <recommendedName>
        <fullName evidence="1">Large-conductance mechanosensitive channel</fullName>
    </recommendedName>
</protein>
<evidence type="ECO:0000255" key="1">
    <source>
        <dbReference type="HAMAP-Rule" id="MF_00115"/>
    </source>
</evidence>
<accession>Q5LGV7</accession>
<sequence length="146" mass="15665">MGKSTFLQDFKAFAMKGNVVDMAVGVIIGGAFGKIVSSVVADIIMPPLGLLIGGVNFTDLKWVMKAAEYGADGKETAAAVTLNYGNFLQATFDFLIIAFSIFLFIKLITKLTQKKAEAPAAPPAPPAPTKEEILLTEIRDLLKEKQ</sequence>
<keyword id="KW-0997">Cell inner membrane</keyword>
<keyword id="KW-1003">Cell membrane</keyword>
<keyword id="KW-0407">Ion channel</keyword>
<keyword id="KW-0406">Ion transport</keyword>
<keyword id="KW-0472">Membrane</keyword>
<keyword id="KW-0812">Transmembrane</keyword>
<keyword id="KW-1133">Transmembrane helix</keyword>
<keyword id="KW-0813">Transport</keyword>
<proteinExistence type="inferred from homology"/>
<name>MSCL_BACFN</name>